<dbReference type="EC" id="2.7.4.3" evidence="1"/>
<dbReference type="EMBL" id="CP001016">
    <property type="protein sequence ID" value="ACB95015.1"/>
    <property type="molecule type" value="Genomic_DNA"/>
</dbReference>
<dbReference type="RefSeq" id="WP_012384372.1">
    <property type="nucleotide sequence ID" value="NC_010581.1"/>
</dbReference>
<dbReference type="SMR" id="B2IK83"/>
<dbReference type="STRING" id="395963.Bind_1375"/>
<dbReference type="KEGG" id="bid:Bind_1375"/>
<dbReference type="eggNOG" id="COG0563">
    <property type="taxonomic scope" value="Bacteria"/>
</dbReference>
<dbReference type="HOGENOM" id="CLU_032354_4_1_5"/>
<dbReference type="OrthoDB" id="9805030at2"/>
<dbReference type="UniPathway" id="UPA00588">
    <property type="reaction ID" value="UER00649"/>
</dbReference>
<dbReference type="Proteomes" id="UP000001695">
    <property type="component" value="Chromosome"/>
</dbReference>
<dbReference type="GO" id="GO:0005737">
    <property type="term" value="C:cytoplasm"/>
    <property type="evidence" value="ECO:0007669"/>
    <property type="project" value="UniProtKB-SubCell"/>
</dbReference>
<dbReference type="GO" id="GO:0004017">
    <property type="term" value="F:adenylate kinase activity"/>
    <property type="evidence" value="ECO:0007669"/>
    <property type="project" value="UniProtKB-UniRule"/>
</dbReference>
<dbReference type="GO" id="GO:0005524">
    <property type="term" value="F:ATP binding"/>
    <property type="evidence" value="ECO:0007669"/>
    <property type="project" value="UniProtKB-UniRule"/>
</dbReference>
<dbReference type="GO" id="GO:0044209">
    <property type="term" value="P:AMP salvage"/>
    <property type="evidence" value="ECO:0007669"/>
    <property type="project" value="UniProtKB-UniRule"/>
</dbReference>
<dbReference type="CDD" id="cd01428">
    <property type="entry name" value="ADK"/>
    <property type="match status" value="1"/>
</dbReference>
<dbReference type="Gene3D" id="3.40.50.300">
    <property type="entry name" value="P-loop containing nucleotide triphosphate hydrolases"/>
    <property type="match status" value="1"/>
</dbReference>
<dbReference type="HAMAP" id="MF_00235">
    <property type="entry name" value="Adenylate_kinase_Adk"/>
    <property type="match status" value="1"/>
</dbReference>
<dbReference type="InterPro" id="IPR006259">
    <property type="entry name" value="Adenyl_kin_sub"/>
</dbReference>
<dbReference type="InterPro" id="IPR000850">
    <property type="entry name" value="Adenylat/UMP-CMP_kin"/>
</dbReference>
<dbReference type="InterPro" id="IPR033690">
    <property type="entry name" value="Adenylat_kinase_CS"/>
</dbReference>
<dbReference type="InterPro" id="IPR027417">
    <property type="entry name" value="P-loop_NTPase"/>
</dbReference>
<dbReference type="NCBIfam" id="TIGR01351">
    <property type="entry name" value="adk"/>
    <property type="match status" value="1"/>
</dbReference>
<dbReference type="NCBIfam" id="NF001381">
    <property type="entry name" value="PRK00279.1-3"/>
    <property type="match status" value="1"/>
</dbReference>
<dbReference type="NCBIfam" id="NF011100">
    <property type="entry name" value="PRK14527.1"/>
    <property type="match status" value="1"/>
</dbReference>
<dbReference type="NCBIfam" id="NF011101">
    <property type="entry name" value="PRK14528.1"/>
    <property type="match status" value="1"/>
</dbReference>
<dbReference type="NCBIfam" id="NF011104">
    <property type="entry name" value="PRK14531.1"/>
    <property type="match status" value="1"/>
</dbReference>
<dbReference type="NCBIfam" id="NF011105">
    <property type="entry name" value="PRK14532.1"/>
    <property type="match status" value="1"/>
</dbReference>
<dbReference type="PANTHER" id="PTHR23359">
    <property type="entry name" value="NUCLEOTIDE KINASE"/>
    <property type="match status" value="1"/>
</dbReference>
<dbReference type="Pfam" id="PF00406">
    <property type="entry name" value="ADK"/>
    <property type="match status" value="1"/>
</dbReference>
<dbReference type="PRINTS" id="PR00094">
    <property type="entry name" value="ADENYLTKNASE"/>
</dbReference>
<dbReference type="SUPFAM" id="SSF52540">
    <property type="entry name" value="P-loop containing nucleoside triphosphate hydrolases"/>
    <property type="match status" value="1"/>
</dbReference>
<dbReference type="PROSITE" id="PS00113">
    <property type="entry name" value="ADENYLATE_KINASE"/>
    <property type="match status" value="1"/>
</dbReference>
<evidence type="ECO:0000255" key="1">
    <source>
        <dbReference type="HAMAP-Rule" id="MF_00235"/>
    </source>
</evidence>
<keyword id="KW-0067">ATP-binding</keyword>
<keyword id="KW-0963">Cytoplasm</keyword>
<keyword id="KW-0418">Kinase</keyword>
<keyword id="KW-0545">Nucleotide biosynthesis</keyword>
<keyword id="KW-0547">Nucleotide-binding</keyword>
<keyword id="KW-1185">Reference proteome</keyword>
<keyword id="KW-0808">Transferase</keyword>
<gene>
    <name evidence="1" type="primary">adk</name>
    <name type="ordered locus">Bind_1375</name>
</gene>
<name>KAD_BEII9</name>
<comment type="function">
    <text evidence="1">Catalyzes the reversible transfer of the terminal phosphate group between ATP and AMP. Plays an important role in cellular energy homeostasis and in adenine nucleotide metabolism.</text>
</comment>
<comment type="catalytic activity">
    <reaction evidence="1">
        <text>AMP + ATP = 2 ADP</text>
        <dbReference type="Rhea" id="RHEA:12973"/>
        <dbReference type="ChEBI" id="CHEBI:30616"/>
        <dbReference type="ChEBI" id="CHEBI:456215"/>
        <dbReference type="ChEBI" id="CHEBI:456216"/>
        <dbReference type="EC" id="2.7.4.3"/>
    </reaction>
</comment>
<comment type="pathway">
    <text evidence="1">Purine metabolism; AMP biosynthesis via salvage pathway; AMP from ADP: step 1/1.</text>
</comment>
<comment type="subunit">
    <text evidence="1">Monomer.</text>
</comment>
<comment type="subcellular location">
    <subcellularLocation>
        <location evidence="1">Cytoplasm</location>
    </subcellularLocation>
</comment>
<comment type="domain">
    <text evidence="1">Consists of three domains, a large central CORE domain and two small peripheral domains, NMPbind and LID, which undergo movements during catalysis. The LID domain closes over the site of phosphoryl transfer upon ATP binding. Assembling and dissambling the active center during each catalytic cycle provides an effective means to prevent ATP hydrolysis.</text>
</comment>
<comment type="similarity">
    <text evidence="1">Belongs to the adenylate kinase family.</text>
</comment>
<sequence>MRLILLGPPGAGKGTQSERLREQCKIPQLSTGDMLRAAVKAGTPIGLKAKAVMDAGGLVSDDIVVGIVADRIEEPDARNGFILDGFPRTVKQAEALTTMLHEKKMDLDAVIELVVDENALLARIEKRAKETLAAGGTVRADDNPAAFKTRIDTYREQTAPVSAYYASQGVLKTVDGMADIDTVTAAIDKILKA</sequence>
<feature type="chain" id="PRO_1000100530" description="Adenylate kinase">
    <location>
        <begin position="1"/>
        <end position="193"/>
    </location>
</feature>
<feature type="region of interest" description="NMP" evidence="1">
    <location>
        <begin position="30"/>
        <end position="59"/>
    </location>
</feature>
<feature type="region of interest" description="LID" evidence="1">
    <location>
        <begin position="126"/>
        <end position="142"/>
    </location>
</feature>
<feature type="binding site" evidence="1">
    <location>
        <begin position="10"/>
        <end position="15"/>
    </location>
    <ligand>
        <name>ATP</name>
        <dbReference type="ChEBI" id="CHEBI:30616"/>
    </ligand>
</feature>
<feature type="binding site" evidence="1">
    <location>
        <position position="31"/>
    </location>
    <ligand>
        <name>AMP</name>
        <dbReference type="ChEBI" id="CHEBI:456215"/>
    </ligand>
</feature>
<feature type="binding site" evidence="1">
    <location>
        <position position="36"/>
    </location>
    <ligand>
        <name>AMP</name>
        <dbReference type="ChEBI" id="CHEBI:456215"/>
    </ligand>
</feature>
<feature type="binding site" evidence="1">
    <location>
        <begin position="57"/>
        <end position="59"/>
    </location>
    <ligand>
        <name>AMP</name>
        <dbReference type="ChEBI" id="CHEBI:456215"/>
    </ligand>
</feature>
<feature type="binding site" evidence="1">
    <location>
        <begin position="85"/>
        <end position="88"/>
    </location>
    <ligand>
        <name>AMP</name>
        <dbReference type="ChEBI" id="CHEBI:456215"/>
    </ligand>
</feature>
<feature type="binding site" evidence="1">
    <location>
        <position position="92"/>
    </location>
    <ligand>
        <name>AMP</name>
        <dbReference type="ChEBI" id="CHEBI:456215"/>
    </ligand>
</feature>
<feature type="binding site" evidence="1">
    <location>
        <position position="127"/>
    </location>
    <ligand>
        <name>ATP</name>
        <dbReference type="ChEBI" id="CHEBI:30616"/>
    </ligand>
</feature>
<feature type="binding site" evidence="1">
    <location>
        <position position="139"/>
    </location>
    <ligand>
        <name>AMP</name>
        <dbReference type="ChEBI" id="CHEBI:456215"/>
    </ligand>
</feature>
<feature type="binding site" evidence="1">
    <location>
        <position position="150"/>
    </location>
    <ligand>
        <name>AMP</name>
        <dbReference type="ChEBI" id="CHEBI:456215"/>
    </ligand>
</feature>
<feature type="binding site" evidence="1">
    <location>
        <position position="178"/>
    </location>
    <ligand>
        <name>ATP</name>
        <dbReference type="ChEBI" id="CHEBI:30616"/>
    </ligand>
</feature>
<accession>B2IK83</accession>
<organism>
    <name type="scientific">Beijerinckia indica subsp. indica (strain ATCC 9039 / DSM 1715 / NCIMB 8712)</name>
    <dbReference type="NCBI Taxonomy" id="395963"/>
    <lineage>
        <taxon>Bacteria</taxon>
        <taxon>Pseudomonadati</taxon>
        <taxon>Pseudomonadota</taxon>
        <taxon>Alphaproteobacteria</taxon>
        <taxon>Hyphomicrobiales</taxon>
        <taxon>Beijerinckiaceae</taxon>
        <taxon>Beijerinckia</taxon>
    </lineage>
</organism>
<reference key="1">
    <citation type="journal article" date="2010" name="J. Bacteriol.">
        <title>Complete genome sequence of Beijerinckia indica subsp. indica.</title>
        <authorList>
            <person name="Tamas I."/>
            <person name="Dedysh S.N."/>
            <person name="Liesack W."/>
            <person name="Stott M.B."/>
            <person name="Alam M."/>
            <person name="Murrell J.C."/>
            <person name="Dunfield P.F."/>
        </authorList>
    </citation>
    <scope>NUCLEOTIDE SEQUENCE [LARGE SCALE GENOMIC DNA]</scope>
    <source>
        <strain>ATCC 9039 / DSM 1715 / NCIMB 8712</strain>
    </source>
</reference>
<protein>
    <recommendedName>
        <fullName evidence="1">Adenylate kinase</fullName>
        <shortName evidence="1">AK</shortName>
        <ecNumber evidence="1">2.7.4.3</ecNumber>
    </recommendedName>
    <alternativeName>
        <fullName evidence="1">ATP-AMP transphosphorylase</fullName>
    </alternativeName>
    <alternativeName>
        <fullName evidence="1">ATP:AMP phosphotransferase</fullName>
    </alternativeName>
    <alternativeName>
        <fullName evidence="1">Adenylate monophosphate kinase</fullName>
    </alternativeName>
</protein>
<proteinExistence type="inferred from homology"/>